<reference key="1">
    <citation type="journal article" date="1999" name="Nature">
        <title>Sequence and analysis of chromosome 2 of the plant Arabidopsis thaliana.</title>
        <authorList>
            <person name="Lin X."/>
            <person name="Kaul S."/>
            <person name="Rounsley S.D."/>
            <person name="Shea T.P."/>
            <person name="Benito M.-I."/>
            <person name="Town C.D."/>
            <person name="Fujii C.Y."/>
            <person name="Mason T.M."/>
            <person name="Bowman C.L."/>
            <person name="Barnstead M.E."/>
            <person name="Feldblyum T.V."/>
            <person name="Buell C.R."/>
            <person name="Ketchum K.A."/>
            <person name="Lee J.J."/>
            <person name="Ronning C.M."/>
            <person name="Koo H.L."/>
            <person name="Moffat K.S."/>
            <person name="Cronin L.A."/>
            <person name="Shen M."/>
            <person name="Pai G."/>
            <person name="Van Aken S."/>
            <person name="Umayam L."/>
            <person name="Tallon L.J."/>
            <person name="Gill J.E."/>
            <person name="Adams M.D."/>
            <person name="Carrera A.J."/>
            <person name="Creasy T.H."/>
            <person name="Goodman H.M."/>
            <person name="Somerville C.R."/>
            <person name="Copenhaver G.P."/>
            <person name="Preuss D."/>
            <person name="Nierman W.C."/>
            <person name="White O."/>
            <person name="Eisen J.A."/>
            <person name="Salzberg S.L."/>
            <person name="Fraser C.M."/>
            <person name="Venter J.C."/>
        </authorList>
    </citation>
    <scope>NUCLEOTIDE SEQUENCE [LARGE SCALE GENOMIC DNA]</scope>
    <source>
        <strain>cv. Columbia</strain>
    </source>
</reference>
<reference key="2">
    <citation type="journal article" date="2017" name="Plant J.">
        <title>Araport11: a complete reannotation of the Arabidopsis thaliana reference genome.</title>
        <authorList>
            <person name="Cheng C.Y."/>
            <person name="Krishnakumar V."/>
            <person name="Chan A.P."/>
            <person name="Thibaud-Nissen F."/>
            <person name="Schobel S."/>
            <person name="Town C.D."/>
        </authorList>
    </citation>
    <scope>GENOME REANNOTATION</scope>
    <source>
        <strain>cv. Columbia</strain>
    </source>
</reference>
<reference key="3">
    <citation type="submission" date="2005-05" db="EMBL/GenBank/DDBJ databases">
        <title>Arabidopsis ORF clones.</title>
        <authorList>
            <person name="Kim C.J."/>
            <person name="Chen H."/>
            <person name="Cheuk R.F."/>
            <person name="Shinn P."/>
            <person name="Ecker J.R."/>
        </authorList>
    </citation>
    <scope>NUCLEOTIDE SEQUENCE [LARGE SCALE MRNA] OF 4-385</scope>
    <source>
        <strain>cv. Columbia</strain>
    </source>
</reference>
<reference key="4">
    <citation type="journal article" date="2008" name="Funct. Integr. Genomics">
        <title>Serpins in plants and green algae.</title>
        <authorList>
            <person name="Roberts T.H."/>
            <person name="Hejgaard J."/>
        </authorList>
    </citation>
    <scope>GENE FAMILY</scope>
    <scope>NOMENCLATURE</scope>
</reference>
<keyword id="KW-0646">Protease inhibitor</keyword>
<keyword id="KW-1185">Reference proteome</keyword>
<keyword id="KW-0722">Serine protease inhibitor</keyword>
<dbReference type="EMBL" id="AC007070">
    <property type="protein sequence ID" value="AAD23667.1"/>
    <property type="molecule type" value="Genomic_DNA"/>
</dbReference>
<dbReference type="EMBL" id="CP002685">
    <property type="protein sequence ID" value="AEC07675.1"/>
    <property type="molecule type" value="Genomic_DNA"/>
</dbReference>
<dbReference type="EMBL" id="BT020243">
    <property type="protein sequence ID" value="AAV74237.1"/>
    <property type="status" value="ALT_INIT"/>
    <property type="molecule type" value="mRNA"/>
</dbReference>
<dbReference type="EMBL" id="BT022062">
    <property type="protein sequence ID" value="AAY25474.1"/>
    <property type="molecule type" value="mRNA"/>
</dbReference>
<dbReference type="PIR" id="A84646">
    <property type="entry name" value="A84646"/>
</dbReference>
<dbReference type="SMR" id="Q9SIR9"/>
<dbReference type="FunCoup" id="Q9SIR9">
    <property type="interactions" value="53"/>
</dbReference>
<dbReference type="STRING" id="3702.Q9SIR9"/>
<dbReference type="PaxDb" id="3702-AT2G25240.1"/>
<dbReference type="ProteomicsDB" id="226912"/>
<dbReference type="EnsemblPlants" id="AT2G25240.1">
    <property type="protein sequence ID" value="AT2G25240.1"/>
    <property type="gene ID" value="AT2G25240"/>
</dbReference>
<dbReference type="GeneID" id="817062"/>
<dbReference type="Gramene" id="AT2G25240.1">
    <property type="protein sequence ID" value="AT2G25240.1"/>
    <property type="gene ID" value="AT2G25240"/>
</dbReference>
<dbReference type="KEGG" id="ath:AT2G25240"/>
<dbReference type="Araport" id="AT2G25240"/>
<dbReference type="TAIR" id="AT2G25240">
    <property type="gene designation" value="CCP3"/>
</dbReference>
<dbReference type="eggNOG" id="KOG2392">
    <property type="taxonomic scope" value="Eukaryota"/>
</dbReference>
<dbReference type="HOGENOM" id="CLU_023330_4_0_1"/>
<dbReference type="InParanoid" id="Q9SIR9"/>
<dbReference type="OMA" id="FKATWEH"/>
<dbReference type="PhylomeDB" id="Q9SIR9"/>
<dbReference type="PRO" id="PR:Q9SIR9"/>
<dbReference type="Proteomes" id="UP000006548">
    <property type="component" value="Chromosome 2"/>
</dbReference>
<dbReference type="ExpressionAtlas" id="Q9SIR9">
    <property type="expression patterns" value="baseline and differential"/>
</dbReference>
<dbReference type="GO" id="GO:0005615">
    <property type="term" value="C:extracellular space"/>
    <property type="evidence" value="ECO:0007669"/>
    <property type="project" value="InterPro"/>
</dbReference>
<dbReference type="GO" id="GO:0004867">
    <property type="term" value="F:serine-type endopeptidase inhibitor activity"/>
    <property type="evidence" value="ECO:0007669"/>
    <property type="project" value="UniProtKB-KW"/>
</dbReference>
<dbReference type="CDD" id="cd02043">
    <property type="entry name" value="serpinP_plants"/>
    <property type="match status" value="1"/>
</dbReference>
<dbReference type="Gene3D" id="2.30.39.10">
    <property type="entry name" value="Alpha-1-antitrypsin, domain 1"/>
    <property type="match status" value="1"/>
</dbReference>
<dbReference type="Gene3D" id="3.30.497.10">
    <property type="entry name" value="Antithrombin, subunit I, domain 2"/>
    <property type="match status" value="1"/>
</dbReference>
<dbReference type="InterPro" id="IPR023795">
    <property type="entry name" value="Serpin_CS"/>
</dbReference>
<dbReference type="InterPro" id="IPR023796">
    <property type="entry name" value="Serpin_dom"/>
</dbReference>
<dbReference type="InterPro" id="IPR000215">
    <property type="entry name" value="Serpin_fam"/>
</dbReference>
<dbReference type="InterPro" id="IPR036186">
    <property type="entry name" value="Serpin_sf"/>
</dbReference>
<dbReference type="InterPro" id="IPR042178">
    <property type="entry name" value="Serpin_sf_1"/>
</dbReference>
<dbReference type="InterPro" id="IPR042185">
    <property type="entry name" value="Serpin_sf_2"/>
</dbReference>
<dbReference type="PANTHER" id="PTHR11461">
    <property type="entry name" value="SERINE PROTEASE INHIBITOR, SERPIN"/>
    <property type="match status" value="1"/>
</dbReference>
<dbReference type="PANTHER" id="PTHR11461:SF304">
    <property type="entry name" value="SERPIN-Z10-RELATED"/>
    <property type="match status" value="1"/>
</dbReference>
<dbReference type="Pfam" id="PF00079">
    <property type="entry name" value="Serpin"/>
    <property type="match status" value="1"/>
</dbReference>
<dbReference type="SMART" id="SM00093">
    <property type="entry name" value="SERPIN"/>
    <property type="match status" value="1"/>
</dbReference>
<dbReference type="SUPFAM" id="SSF56574">
    <property type="entry name" value="Serpins"/>
    <property type="match status" value="1"/>
</dbReference>
<dbReference type="PROSITE" id="PS00284">
    <property type="entry name" value="SERPIN"/>
    <property type="match status" value="1"/>
</dbReference>
<protein>
    <recommendedName>
        <fullName>Serpin-Z10</fullName>
    </recommendedName>
    <alternativeName>
        <fullName>ArathZ10</fullName>
    </alternativeName>
</protein>
<gene>
    <name type="ordered locus">At2g25240</name>
    <name type="ORF">T22F11.17</name>
</gene>
<comment type="function">
    <text evidence="1">Probable serine protease inhibitor.</text>
</comment>
<comment type="domain">
    <text evidence="1">The reactive center loop (RCL) extends out from the body of the protein and directs binding to the target protease. The protease cleaves the serpin at the reactive site within the RCL, establishing a covalent linkage between the carboxyl group of the serpin reactive site and the serine hydroxyl of the protease. The resulting inactive serpin-protease complex is highly stable (By similarity).</text>
</comment>
<comment type="similarity">
    <text evidence="3">Belongs to the serpin family.</text>
</comment>
<comment type="sequence caution" evidence="3">
    <conflict type="erroneous initiation">
        <sequence resource="EMBL-CDS" id="AAV74237"/>
    </conflict>
</comment>
<organism>
    <name type="scientific">Arabidopsis thaliana</name>
    <name type="common">Mouse-ear cress</name>
    <dbReference type="NCBI Taxonomy" id="3702"/>
    <lineage>
        <taxon>Eukaryota</taxon>
        <taxon>Viridiplantae</taxon>
        <taxon>Streptophyta</taxon>
        <taxon>Embryophyta</taxon>
        <taxon>Tracheophyta</taxon>
        <taxon>Spermatophyta</taxon>
        <taxon>Magnoliopsida</taxon>
        <taxon>eudicotyledons</taxon>
        <taxon>Gunneridae</taxon>
        <taxon>Pentapetalae</taxon>
        <taxon>rosids</taxon>
        <taxon>malvids</taxon>
        <taxon>Brassicales</taxon>
        <taxon>Brassicaceae</taxon>
        <taxon>Camelineae</taxon>
        <taxon>Arabidopsis</taxon>
    </lineage>
</organism>
<evidence type="ECO:0000250" key="1"/>
<evidence type="ECO:0000255" key="2"/>
<evidence type="ECO:0000305" key="3"/>
<name>SPZ10_ARATH</name>
<sequence length="385" mass="42724">MELGKSIENHNDVVVRLTKHVIATVANGSNLVFSPISINVLLSLIAAGSCSVTKEQILSFLMLPSTDHLNLVLAQIIDGGTEKSDLRLSIANGVWIDKFFSLKLSFKDLLENSYKATCSQVDFASKPSEVIDEVNTWAEVHTNGLIKQILSRDSIDTIRSSTLVLANAVYFKGAWSSKFDANMTKKNDFHLLDGTSVKVPFMTNYEDQYLRSYDGFKVLRLPYIEDQRQFSMYIYLPNDKEGLAPLLEKIGSEPSFFDNHIPLHCISVGAFRIPKFKFSFEFNASEVLKDMGLTSPFNNGGGLTEMVDSPSNGDDLYVSSILHKACIEVDEEGTEAAAVSVGVVSCTSFRRNPDFVADRPFLFTVREDKSGVILFMGQVLDPSKH</sequence>
<proteinExistence type="evidence at transcript level"/>
<feature type="chain" id="PRO_0000334551" description="Serpin-Z10">
    <location>
        <begin position="1"/>
        <end position="385"/>
    </location>
</feature>
<feature type="region of interest" description="RCL">
    <location>
        <begin position="333"/>
        <end position="357"/>
    </location>
</feature>
<feature type="site" description="Reactive bond" evidence="2">
    <location>
        <begin position="347"/>
        <end position="348"/>
    </location>
</feature>
<accession>Q9SIR9</accession>
<accession>Q5PP54</accession>